<protein>
    <recommendedName>
        <fullName>Protease inhibitor carrapatin</fullName>
    </recommendedName>
</protein>
<reference key="1">
    <citation type="submission" date="1998-01" db="UniProtKB">
        <authorList>
            <person name="Fuentes-Prior P."/>
            <person name="Pereira P.J.B."/>
            <person name="Mentele R."/>
            <person name="Bode W."/>
        </authorList>
    </citation>
    <scope>PROTEIN SEQUENCE</scope>
</reference>
<keyword id="KW-0903">Direct protein sequencing</keyword>
<keyword id="KW-1015">Disulfide bond</keyword>
<keyword id="KW-0646">Protease inhibitor</keyword>
<keyword id="KW-0964">Secreted</keyword>
<keyword id="KW-0722">Serine protease inhibitor</keyword>
<evidence type="ECO:0000250" key="1"/>
<evidence type="ECO:0000255" key="2">
    <source>
        <dbReference type="PROSITE-ProRule" id="PRU00031"/>
    </source>
</evidence>
<accession>P81162</accession>
<dbReference type="SMR" id="P81162"/>
<dbReference type="MEROPS" id="I02.023"/>
<dbReference type="VEuPathDB" id="VectorBase:LOC119167313"/>
<dbReference type="OrthoDB" id="5950222at2759"/>
<dbReference type="GO" id="GO:0005615">
    <property type="term" value="C:extracellular space"/>
    <property type="evidence" value="ECO:0007669"/>
    <property type="project" value="TreeGrafter"/>
</dbReference>
<dbReference type="GO" id="GO:0004867">
    <property type="term" value="F:serine-type endopeptidase inhibitor activity"/>
    <property type="evidence" value="ECO:0007669"/>
    <property type="project" value="UniProtKB-KW"/>
</dbReference>
<dbReference type="GO" id="GO:0044562">
    <property type="term" value="P:envenomation resulting in negative regulation of voltage-gated potassium channel activity in another organism"/>
    <property type="evidence" value="ECO:0007669"/>
    <property type="project" value="UniProtKB-ARBA"/>
</dbReference>
<dbReference type="CDD" id="cd22604">
    <property type="entry name" value="Kunitz_BmTI-like"/>
    <property type="match status" value="1"/>
</dbReference>
<dbReference type="FunFam" id="4.10.410.10:FF:000004">
    <property type="entry name" value="Tissue factor pathway inhibitor"/>
    <property type="match status" value="1"/>
</dbReference>
<dbReference type="Gene3D" id="4.10.410.10">
    <property type="entry name" value="Pancreatic trypsin inhibitor Kunitz domain"/>
    <property type="match status" value="1"/>
</dbReference>
<dbReference type="InterPro" id="IPR002223">
    <property type="entry name" value="Kunitz_BPTI"/>
</dbReference>
<dbReference type="InterPro" id="IPR036880">
    <property type="entry name" value="Kunitz_BPTI_sf"/>
</dbReference>
<dbReference type="InterPro" id="IPR020901">
    <property type="entry name" value="Prtase_inh_Kunz-CS"/>
</dbReference>
<dbReference type="InterPro" id="IPR050098">
    <property type="entry name" value="TFPI/VKTCI-like"/>
</dbReference>
<dbReference type="PANTHER" id="PTHR10083:SF374">
    <property type="entry name" value="BPTI_KUNITZ INHIBITOR DOMAIN-CONTAINING PROTEIN"/>
    <property type="match status" value="1"/>
</dbReference>
<dbReference type="PANTHER" id="PTHR10083">
    <property type="entry name" value="KUNITZ-TYPE PROTEASE INHIBITOR-RELATED"/>
    <property type="match status" value="1"/>
</dbReference>
<dbReference type="Pfam" id="PF00014">
    <property type="entry name" value="Kunitz_BPTI"/>
    <property type="match status" value="1"/>
</dbReference>
<dbReference type="PRINTS" id="PR00759">
    <property type="entry name" value="BASICPTASE"/>
</dbReference>
<dbReference type="SMART" id="SM00131">
    <property type="entry name" value="KU"/>
    <property type="match status" value="1"/>
</dbReference>
<dbReference type="SUPFAM" id="SSF57362">
    <property type="entry name" value="BPTI-like"/>
    <property type="match status" value="1"/>
</dbReference>
<dbReference type="PROSITE" id="PS00280">
    <property type="entry name" value="BPTI_KUNITZ_1"/>
    <property type="match status" value="1"/>
</dbReference>
<dbReference type="PROSITE" id="PS50279">
    <property type="entry name" value="BPTI_KUNITZ_2"/>
    <property type="match status" value="1"/>
</dbReference>
<proteinExistence type="evidence at protein level"/>
<organism>
    <name type="scientific">Rhipicephalus microplus</name>
    <name type="common">Cattle tick</name>
    <name type="synonym">Boophilus microplus</name>
    <dbReference type="NCBI Taxonomy" id="6941"/>
    <lineage>
        <taxon>Eukaryota</taxon>
        <taxon>Metazoa</taxon>
        <taxon>Ecdysozoa</taxon>
        <taxon>Arthropoda</taxon>
        <taxon>Chelicerata</taxon>
        <taxon>Arachnida</taxon>
        <taxon>Acari</taxon>
        <taxon>Parasitiformes</taxon>
        <taxon>Ixodida</taxon>
        <taxon>Ixodoidea</taxon>
        <taxon>Ixodidae</taxon>
        <taxon>Rhipicephalinae</taxon>
        <taxon>Rhipicephalus</taxon>
        <taxon>Boophilus</taxon>
    </lineage>
</organism>
<feature type="chain" id="PRO_0000155456" description="Protease inhibitor carrapatin">
    <location>
        <begin position="1"/>
        <end position="69"/>
    </location>
</feature>
<feature type="domain" description="BPTI/Kunitz inhibitor" evidence="2">
    <location>
        <begin position="8"/>
        <end position="58"/>
    </location>
</feature>
<feature type="site" description="Reactive bond" evidence="1">
    <location>
        <begin position="18"/>
        <end position="19"/>
    </location>
</feature>
<feature type="disulfide bond" evidence="2">
    <location>
        <begin position="8"/>
        <end position="58"/>
    </location>
</feature>
<feature type="disulfide bond" evidence="2">
    <location>
        <begin position="17"/>
        <end position="41"/>
    </location>
</feature>
<feature type="disulfide bond" evidence="2">
    <location>
        <begin position="33"/>
        <end position="54"/>
    </location>
</feature>
<name>CRPTI_RHIMP</name>
<comment type="function">
    <text>Serine protease inhibitor.</text>
</comment>
<comment type="subcellular location">
    <subcellularLocation>
        <location>Secreted</location>
    </subcellularLocation>
</comment>
<sequence>AVDFDKQCVPTADPGPCKGFMPMWWYNIFTSQCEEFIYGGCQGNDNRYRTKEECDKTCAEASATWDVNA</sequence>